<dbReference type="EMBL" id="FM204884">
    <property type="protein sequence ID" value="CAW97652.1"/>
    <property type="molecule type" value="Genomic_DNA"/>
</dbReference>
<dbReference type="SMR" id="C0MCB4"/>
<dbReference type="KEGG" id="seq:SZO_00540"/>
<dbReference type="eggNOG" id="COG0185">
    <property type="taxonomic scope" value="Bacteria"/>
</dbReference>
<dbReference type="HOGENOM" id="CLU_144911_0_1_9"/>
<dbReference type="Proteomes" id="UP000001368">
    <property type="component" value="Chromosome"/>
</dbReference>
<dbReference type="GO" id="GO:0005737">
    <property type="term" value="C:cytoplasm"/>
    <property type="evidence" value="ECO:0007669"/>
    <property type="project" value="UniProtKB-ARBA"/>
</dbReference>
<dbReference type="GO" id="GO:0015935">
    <property type="term" value="C:small ribosomal subunit"/>
    <property type="evidence" value="ECO:0007669"/>
    <property type="project" value="InterPro"/>
</dbReference>
<dbReference type="GO" id="GO:0019843">
    <property type="term" value="F:rRNA binding"/>
    <property type="evidence" value="ECO:0007669"/>
    <property type="project" value="UniProtKB-UniRule"/>
</dbReference>
<dbReference type="GO" id="GO:0003735">
    <property type="term" value="F:structural constituent of ribosome"/>
    <property type="evidence" value="ECO:0007669"/>
    <property type="project" value="InterPro"/>
</dbReference>
<dbReference type="GO" id="GO:0000028">
    <property type="term" value="P:ribosomal small subunit assembly"/>
    <property type="evidence" value="ECO:0007669"/>
    <property type="project" value="TreeGrafter"/>
</dbReference>
<dbReference type="GO" id="GO:0006412">
    <property type="term" value="P:translation"/>
    <property type="evidence" value="ECO:0007669"/>
    <property type="project" value="UniProtKB-UniRule"/>
</dbReference>
<dbReference type="FunFam" id="3.30.860.10:FF:000001">
    <property type="entry name" value="30S ribosomal protein S19"/>
    <property type="match status" value="1"/>
</dbReference>
<dbReference type="Gene3D" id="3.30.860.10">
    <property type="entry name" value="30s Ribosomal Protein S19, Chain A"/>
    <property type="match status" value="1"/>
</dbReference>
<dbReference type="HAMAP" id="MF_00531">
    <property type="entry name" value="Ribosomal_uS19"/>
    <property type="match status" value="1"/>
</dbReference>
<dbReference type="InterPro" id="IPR002222">
    <property type="entry name" value="Ribosomal_uS19"/>
</dbReference>
<dbReference type="InterPro" id="IPR005732">
    <property type="entry name" value="Ribosomal_uS19_bac-type"/>
</dbReference>
<dbReference type="InterPro" id="IPR020934">
    <property type="entry name" value="Ribosomal_uS19_CS"/>
</dbReference>
<dbReference type="InterPro" id="IPR023575">
    <property type="entry name" value="Ribosomal_uS19_SF"/>
</dbReference>
<dbReference type="NCBIfam" id="TIGR01050">
    <property type="entry name" value="rpsS_bact"/>
    <property type="match status" value="1"/>
</dbReference>
<dbReference type="PANTHER" id="PTHR11880">
    <property type="entry name" value="RIBOSOMAL PROTEIN S19P FAMILY MEMBER"/>
    <property type="match status" value="1"/>
</dbReference>
<dbReference type="PANTHER" id="PTHR11880:SF8">
    <property type="entry name" value="SMALL RIBOSOMAL SUBUNIT PROTEIN US19M"/>
    <property type="match status" value="1"/>
</dbReference>
<dbReference type="Pfam" id="PF00203">
    <property type="entry name" value="Ribosomal_S19"/>
    <property type="match status" value="1"/>
</dbReference>
<dbReference type="PIRSF" id="PIRSF002144">
    <property type="entry name" value="Ribosomal_S19"/>
    <property type="match status" value="1"/>
</dbReference>
<dbReference type="PRINTS" id="PR00975">
    <property type="entry name" value="RIBOSOMALS19"/>
</dbReference>
<dbReference type="SUPFAM" id="SSF54570">
    <property type="entry name" value="Ribosomal protein S19"/>
    <property type="match status" value="1"/>
</dbReference>
<dbReference type="PROSITE" id="PS00323">
    <property type="entry name" value="RIBOSOMAL_S19"/>
    <property type="match status" value="1"/>
</dbReference>
<sequence>MGRSLKKGPFVDEHLMKKVEAQANDEKKKVIKTWSRRSTIFPSFIGYTIAVYDGRKHVPVYIQEDMVGHKLGEFAPTRTYKGHAADDKKTRR</sequence>
<feature type="chain" id="PRO_1000211819" description="Small ribosomal subunit protein uS19">
    <location>
        <begin position="1"/>
        <end position="92"/>
    </location>
</feature>
<protein>
    <recommendedName>
        <fullName evidence="1">Small ribosomal subunit protein uS19</fullName>
    </recommendedName>
    <alternativeName>
        <fullName evidence="2">30S ribosomal protein S19</fullName>
    </alternativeName>
</protein>
<comment type="function">
    <text evidence="1">Protein S19 forms a complex with S13 that binds strongly to the 16S ribosomal RNA.</text>
</comment>
<comment type="similarity">
    <text evidence="1">Belongs to the universal ribosomal protein uS19 family.</text>
</comment>
<gene>
    <name evidence="1" type="primary">rpsS</name>
    <name type="ordered locus">SZO_00540</name>
</gene>
<accession>C0MCB4</accession>
<reference key="1">
    <citation type="journal article" date="2009" name="PLoS Pathog.">
        <title>Genomic evidence for the evolution of Streptococcus equi: host restriction, increased virulence, and genetic exchange with human pathogens.</title>
        <authorList>
            <person name="Holden M.T.G."/>
            <person name="Heather Z."/>
            <person name="Paillot R."/>
            <person name="Steward K.F."/>
            <person name="Webb K."/>
            <person name="Ainslie F."/>
            <person name="Jourdan T."/>
            <person name="Bason N.C."/>
            <person name="Holroyd N.E."/>
            <person name="Mungall K."/>
            <person name="Quail M.A."/>
            <person name="Sanders M."/>
            <person name="Simmonds M."/>
            <person name="Willey D."/>
            <person name="Brooks K."/>
            <person name="Aanensen D.M."/>
            <person name="Spratt B.G."/>
            <person name="Jolley K.A."/>
            <person name="Maiden M.C.J."/>
            <person name="Kehoe M."/>
            <person name="Chanter N."/>
            <person name="Bentley S.D."/>
            <person name="Robinson C."/>
            <person name="Maskell D.J."/>
            <person name="Parkhill J."/>
            <person name="Waller A.S."/>
        </authorList>
    </citation>
    <scope>NUCLEOTIDE SEQUENCE [LARGE SCALE GENOMIC DNA]</scope>
    <source>
        <strain>H70</strain>
    </source>
</reference>
<keyword id="KW-0687">Ribonucleoprotein</keyword>
<keyword id="KW-0689">Ribosomal protein</keyword>
<keyword id="KW-0694">RNA-binding</keyword>
<keyword id="KW-0699">rRNA-binding</keyword>
<organism>
    <name type="scientific">Streptococcus equi subsp. zooepidemicus (strain H70)</name>
    <dbReference type="NCBI Taxonomy" id="553483"/>
    <lineage>
        <taxon>Bacteria</taxon>
        <taxon>Bacillati</taxon>
        <taxon>Bacillota</taxon>
        <taxon>Bacilli</taxon>
        <taxon>Lactobacillales</taxon>
        <taxon>Streptococcaceae</taxon>
        <taxon>Streptococcus</taxon>
    </lineage>
</organism>
<proteinExistence type="inferred from homology"/>
<name>RS19_STRS7</name>
<evidence type="ECO:0000255" key="1">
    <source>
        <dbReference type="HAMAP-Rule" id="MF_00531"/>
    </source>
</evidence>
<evidence type="ECO:0000305" key="2"/>